<keyword id="KW-1003">Cell membrane</keyword>
<keyword id="KW-0903">Direct protein sequencing</keyword>
<keyword id="KW-0325">Glycoprotein</keyword>
<keyword id="KW-0336">GPI-anchor</keyword>
<keyword id="KW-0379">Hydroxylation</keyword>
<keyword id="KW-0449">Lipoprotein</keyword>
<keyword id="KW-0472">Membrane</keyword>
<keyword id="KW-0654">Proteoglycan</keyword>
<keyword id="KW-0873">Pyrrolidone carboxylic acid</keyword>
<keyword id="KW-1185">Reference proteome</keyword>
<keyword id="KW-0732">Signal</keyword>
<sequence length="130" mass="12510">MNSKIIEAFFIVALFTTSCLAQAPAPSPTTTVTPPPVATPPPAATPAPTTTPPPAVSPAPTSSPPSSAPSPSSDAPTASPPAPEGPGVSPGELAPTPSDASAPPPNAALTNKAFVVGSLVAAIIYAVVLA</sequence>
<reference key="1">
    <citation type="journal article" date="1998" name="DNA Res.">
        <title>Structural analysis of Arabidopsis thaliana chromosome 5. V. Sequence features of the regions of 1,381,565 bp covered by twenty one physically assigned P1 and TAC clones.</title>
        <authorList>
            <person name="Kaneko T."/>
            <person name="Kotani H."/>
            <person name="Nakamura Y."/>
            <person name="Sato S."/>
            <person name="Asamizu E."/>
            <person name="Miyajima N."/>
            <person name="Tabata S."/>
        </authorList>
    </citation>
    <scope>NUCLEOTIDE SEQUENCE [LARGE SCALE GENOMIC DNA]</scope>
    <source>
        <strain>cv. Columbia</strain>
    </source>
</reference>
<reference key="2">
    <citation type="journal article" date="2017" name="Plant J.">
        <title>Araport11: a complete reannotation of the Arabidopsis thaliana reference genome.</title>
        <authorList>
            <person name="Cheng C.Y."/>
            <person name="Krishnakumar V."/>
            <person name="Chan A.P."/>
            <person name="Thibaud-Nissen F."/>
            <person name="Schobel S."/>
            <person name="Town C.D."/>
        </authorList>
    </citation>
    <scope>GENOME REANNOTATION</scope>
    <source>
        <strain>cv. Columbia</strain>
    </source>
</reference>
<reference key="3">
    <citation type="journal article" date="2003" name="Science">
        <title>Empirical analysis of transcriptional activity in the Arabidopsis genome.</title>
        <authorList>
            <person name="Yamada K."/>
            <person name="Lim J."/>
            <person name="Dale J.M."/>
            <person name="Chen H."/>
            <person name="Shinn P."/>
            <person name="Palm C.J."/>
            <person name="Southwick A.M."/>
            <person name="Wu H.C."/>
            <person name="Kim C.J."/>
            <person name="Nguyen M."/>
            <person name="Pham P.K."/>
            <person name="Cheuk R.F."/>
            <person name="Karlin-Newmann G."/>
            <person name="Liu S.X."/>
            <person name="Lam B."/>
            <person name="Sakano H."/>
            <person name="Wu T."/>
            <person name="Yu G."/>
            <person name="Miranda M."/>
            <person name="Quach H.L."/>
            <person name="Tripp M."/>
            <person name="Chang C.H."/>
            <person name="Lee J.M."/>
            <person name="Toriumi M.J."/>
            <person name="Chan M.M."/>
            <person name="Tang C.C."/>
            <person name="Onodera C.S."/>
            <person name="Deng J.M."/>
            <person name="Akiyama K."/>
            <person name="Ansari Y."/>
            <person name="Arakawa T."/>
            <person name="Banh J."/>
            <person name="Banno F."/>
            <person name="Bowser L."/>
            <person name="Brooks S.Y."/>
            <person name="Carninci P."/>
            <person name="Chao Q."/>
            <person name="Choy N."/>
            <person name="Enju A."/>
            <person name="Goldsmith A.D."/>
            <person name="Gurjal M."/>
            <person name="Hansen N.F."/>
            <person name="Hayashizaki Y."/>
            <person name="Johnson-Hopson C."/>
            <person name="Hsuan V.W."/>
            <person name="Iida K."/>
            <person name="Karnes M."/>
            <person name="Khan S."/>
            <person name="Koesema E."/>
            <person name="Ishida J."/>
            <person name="Jiang P.X."/>
            <person name="Jones T."/>
            <person name="Kawai J."/>
            <person name="Kamiya A."/>
            <person name="Meyers C."/>
            <person name="Nakajima M."/>
            <person name="Narusaka M."/>
            <person name="Seki M."/>
            <person name="Sakurai T."/>
            <person name="Satou M."/>
            <person name="Tamse R."/>
            <person name="Vaysberg M."/>
            <person name="Wallender E.K."/>
            <person name="Wong C."/>
            <person name="Yamamura Y."/>
            <person name="Yuan S."/>
            <person name="Shinozaki K."/>
            <person name="Davis R.W."/>
            <person name="Theologis A."/>
            <person name="Ecker J.R."/>
        </authorList>
    </citation>
    <scope>NUCLEOTIDE SEQUENCE [LARGE SCALE MRNA]</scope>
    <source>
        <strain>cv. Columbia</strain>
    </source>
</reference>
<reference key="4">
    <citation type="submission" date="2002-03" db="EMBL/GenBank/DDBJ databases">
        <title>Full-length cDNA from Arabidopsis thaliana.</title>
        <authorList>
            <person name="Brover V.V."/>
            <person name="Troukhan M.E."/>
            <person name="Alexandrov N.A."/>
            <person name="Lu Y.-P."/>
            <person name="Flavell R.B."/>
            <person name="Feldmann K.A."/>
        </authorList>
    </citation>
    <scope>NUCLEOTIDE SEQUENCE [LARGE SCALE MRNA]</scope>
</reference>
<reference key="5">
    <citation type="journal article" date="2000" name="Plant Cell">
        <title>The classical arabinogalactan protein gene family of Arabidopsis.</title>
        <authorList>
            <person name="Schultz C.J."/>
            <person name="Johnson K.L."/>
            <person name="Currie G."/>
            <person name="Bacic A."/>
        </authorList>
    </citation>
    <scope>NUCLEOTIDE SEQUENCE [MRNA] OF 108-130</scope>
    <scope>PROTEIN SEQUENCE OF 22-37</scope>
    <scope>HYDROXYLATION AT PRO-24; PRO-26; PRO-28; PRO-35 AND PRO-36</scope>
    <scope>PYROGLUTAMATE FORMATION AT GLN-22</scope>
    <source>
        <strain>cv. Columbia</strain>
    </source>
</reference>
<reference key="6">
    <citation type="journal article" date="2002" name="Plant Physiol.">
        <title>Using genomic resources to guide research directions. The arabinogalactan protein gene family as a test case.</title>
        <authorList>
            <person name="Schultz C.J."/>
            <person name="Rumsewicz M.P."/>
            <person name="Johnson K.L."/>
            <person name="Jones B.J."/>
            <person name="Gaspar Y.M."/>
            <person name="Bacic A."/>
        </authorList>
    </citation>
    <scope>GENE FAMILY</scope>
    <scope>NOMENCLATURE</scope>
</reference>
<feature type="signal peptide" evidence="3">
    <location>
        <begin position="1"/>
        <end position="21"/>
    </location>
</feature>
<feature type="chain" id="PRO_0000268997" description="Classical arabinogalactan protein 7">
    <location>
        <begin position="22"/>
        <end position="106"/>
    </location>
</feature>
<feature type="propeptide" id="PRO_0000268998" description="Removed in mature form" evidence="1">
    <location>
        <begin position="107"/>
        <end position="130"/>
    </location>
</feature>
<feature type="region of interest" description="Disordered" evidence="2">
    <location>
        <begin position="22"/>
        <end position="108"/>
    </location>
</feature>
<feature type="compositionally biased region" description="Pro residues" evidence="2">
    <location>
        <begin position="33"/>
        <end position="68"/>
    </location>
</feature>
<feature type="modified residue" description="Pyrrolidone carboxylic acid" evidence="3">
    <location>
        <position position="22"/>
    </location>
</feature>
<feature type="modified residue" description="4-hydroxyproline" evidence="3">
    <location>
        <position position="24"/>
    </location>
</feature>
<feature type="modified residue" description="4-hydroxyproline" evidence="3">
    <location>
        <position position="26"/>
    </location>
</feature>
<feature type="modified residue" description="4-hydroxyproline" evidence="3">
    <location>
        <position position="28"/>
    </location>
</feature>
<feature type="modified residue" description="4-hydroxyproline" evidence="3">
    <location>
        <position position="35"/>
    </location>
</feature>
<feature type="modified residue" description="4-hydroxyproline" evidence="3">
    <location>
        <position position="36"/>
    </location>
</feature>
<feature type="lipid moiety-binding region" description="GPI-anchor amidated asparagine" evidence="1">
    <location>
        <position position="106"/>
    </location>
</feature>
<feature type="glycosylation site" description="O-linked (Ara...) hydroxyproline" evidence="1">
    <location>
        <position position="24"/>
    </location>
</feature>
<feature type="glycosylation site" description="O-linked (Ara...) hydroxyproline" evidence="1">
    <location>
        <position position="26"/>
    </location>
</feature>
<feature type="glycosylation site" description="O-linked (Ara...) hydroxyproline" evidence="1">
    <location>
        <position position="28"/>
    </location>
</feature>
<feature type="glycosylation site" description="O-linked (Ara...) hydroxyproline" evidence="1">
    <location>
        <position position="35"/>
    </location>
</feature>
<feature type="glycosylation site" description="O-linked (Ara...) hydroxyproline" evidence="1">
    <location>
        <position position="36"/>
    </location>
</feature>
<feature type="sequence conflict" description="In Ref. 4; AAM61027." evidence="4" ref="4">
    <original>E</original>
    <variation>D</variation>
    <location>
        <position position="92"/>
    </location>
</feature>
<feature type="sequence conflict" description="In Ref. 4; AAM61027." evidence="4" ref="4">
    <original>V</original>
    <variation>F</variation>
    <location>
        <position position="120"/>
    </location>
</feature>
<feature type="sequence conflict" description="In Ref. 4; AAM61027." evidence="4" ref="4">
    <original>II</original>
    <variation>VV</variation>
    <location>
        <begin position="123"/>
        <end position="124"/>
    </location>
</feature>
<name>AGP7_ARATH</name>
<evidence type="ECO:0000255" key="1"/>
<evidence type="ECO:0000256" key="2">
    <source>
        <dbReference type="SAM" id="MobiDB-lite"/>
    </source>
</evidence>
<evidence type="ECO:0000269" key="3">
    <source>
    </source>
</evidence>
<evidence type="ECO:0000305" key="4"/>
<comment type="function">
    <text>Proteoglycan that seems to be implicated in diverse developmental roles such as differentiation, cell-cell recognition, embryogenesis and programmed cell death.</text>
</comment>
<comment type="subcellular location">
    <subcellularLocation>
        <location evidence="4">Cell membrane</location>
        <topology evidence="4">Lipid-anchor</topology>
        <topology evidence="4">GPI-anchor</topology>
    </subcellularLocation>
</comment>
<comment type="PTM">
    <text>O-glycosylated on hydroxyprolines; noncontiguous hydroxylproline residues are glycosylated with arabinogalactan.</text>
</comment>
<comment type="similarity">
    <text evidence="4">Belongs to the classical AGP family.</text>
</comment>
<protein>
    <recommendedName>
        <fullName>Classical arabinogalactan protein 7</fullName>
    </recommendedName>
</protein>
<accession>Q8LG54</accession>
<accession>Q9FKQ0</accession>
<organism>
    <name type="scientific">Arabidopsis thaliana</name>
    <name type="common">Mouse-ear cress</name>
    <dbReference type="NCBI Taxonomy" id="3702"/>
    <lineage>
        <taxon>Eukaryota</taxon>
        <taxon>Viridiplantae</taxon>
        <taxon>Streptophyta</taxon>
        <taxon>Embryophyta</taxon>
        <taxon>Tracheophyta</taxon>
        <taxon>Spermatophyta</taxon>
        <taxon>Magnoliopsida</taxon>
        <taxon>eudicotyledons</taxon>
        <taxon>Gunneridae</taxon>
        <taxon>Pentapetalae</taxon>
        <taxon>rosids</taxon>
        <taxon>malvids</taxon>
        <taxon>Brassicales</taxon>
        <taxon>Brassicaceae</taxon>
        <taxon>Camelineae</taxon>
        <taxon>Arabidopsis</taxon>
    </lineage>
</organism>
<proteinExistence type="evidence at protein level"/>
<dbReference type="EMBL" id="AB011479">
    <property type="protein sequence ID" value="BAB11561.1"/>
    <property type="molecule type" value="Genomic_DNA"/>
</dbReference>
<dbReference type="EMBL" id="CP002688">
    <property type="protein sequence ID" value="AED98046.1"/>
    <property type="molecule type" value="Genomic_DNA"/>
</dbReference>
<dbReference type="EMBL" id="AY050361">
    <property type="protein sequence ID" value="AAK91378.1"/>
    <property type="molecule type" value="mRNA"/>
</dbReference>
<dbReference type="EMBL" id="AY094049">
    <property type="protein sequence ID" value="AAM16205.1"/>
    <property type="molecule type" value="mRNA"/>
</dbReference>
<dbReference type="EMBL" id="AY084455">
    <property type="protein sequence ID" value="AAM61027.1"/>
    <property type="molecule type" value="mRNA"/>
</dbReference>
<dbReference type="EMBL" id="AF195888">
    <property type="status" value="NOT_ANNOTATED_CDS"/>
    <property type="molecule type" value="mRNA"/>
</dbReference>
<dbReference type="RefSeq" id="NP_569011.1">
    <property type="nucleotide sequence ID" value="NM_125937.3"/>
</dbReference>
<dbReference type="STRING" id="3702.Q8LG54"/>
<dbReference type="GlyCosmos" id="Q8LG54">
    <property type="glycosylation" value="5 sites, No reported glycans"/>
</dbReference>
<dbReference type="GlyGen" id="Q8LG54">
    <property type="glycosylation" value="3 sites"/>
</dbReference>
<dbReference type="PaxDb" id="3702-AT5G65390.1"/>
<dbReference type="EnsemblPlants" id="AT5G65390.1">
    <property type="protein sequence ID" value="AT5G65390.1"/>
    <property type="gene ID" value="AT5G65390"/>
</dbReference>
<dbReference type="GeneID" id="836664"/>
<dbReference type="Gramene" id="AT5G65390.1">
    <property type="protein sequence ID" value="AT5G65390.1"/>
    <property type="gene ID" value="AT5G65390"/>
</dbReference>
<dbReference type="KEGG" id="ath:AT5G65390"/>
<dbReference type="Araport" id="AT5G65390"/>
<dbReference type="TAIR" id="AT5G65390">
    <property type="gene designation" value="AGP7"/>
</dbReference>
<dbReference type="eggNOG" id="ENOG502SY2B">
    <property type="taxonomic scope" value="Eukaryota"/>
</dbReference>
<dbReference type="HOGENOM" id="CLU_149596_0_0_1"/>
<dbReference type="InParanoid" id="Q8LG54"/>
<dbReference type="OMA" id="MEPASDI"/>
<dbReference type="PRO" id="PR:Q8LG54"/>
<dbReference type="Proteomes" id="UP000006548">
    <property type="component" value="Chromosome 5"/>
</dbReference>
<dbReference type="ExpressionAtlas" id="Q8LG54">
    <property type="expression patterns" value="baseline and differential"/>
</dbReference>
<dbReference type="GO" id="GO:0005886">
    <property type="term" value="C:plasma membrane"/>
    <property type="evidence" value="ECO:0007669"/>
    <property type="project" value="UniProtKB-SubCell"/>
</dbReference>
<dbReference type="GO" id="GO:0098552">
    <property type="term" value="C:side of membrane"/>
    <property type="evidence" value="ECO:0007669"/>
    <property type="project" value="UniProtKB-KW"/>
</dbReference>
<dbReference type="InterPro" id="IPR044959">
    <property type="entry name" value="AGP"/>
</dbReference>
<dbReference type="PANTHER" id="PTHR36321:SF6">
    <property type="entry name" value="CLASSICAL ARABINOGALACTAN PROTEIN 4-RELATED"/>
    <property type="match status" value="1"/>
</dbReference>
<dbReference type="PANTHER" id="PTHR36321">
    <property type="entry name" value="CLASSICAL ARABINOGALACTAN PROTEIN 9"/>
    <property type="match status" value="1"/>
</dbReference>
<gene>
    <name type="primary">AGP7</name>
    <name type="ordered locus">At5g65390</name>
    <name type="ORF">MNA5.12</name>
</gene>